<organism>
    <name type="scientific">Eremothecium gossypii (strain ATCC 10895 / CBS 109.51 / FGSC 9923 / NRRL Y-1056)</name>
    <name type="common">Yeast</name>
    <name type="synonym">Ashbya gossypii</name>
    <dbReference type="NCBI Taxonomy" id="284811"/>
    <lineage>
        <taxon>Eukaryota</taxon>
        <taxon>Fungi</taxon>
        <taxon>Dikarya</taxon>
        <taxon>Ascomycota</taxon>
        <taxon>Saccharomycotina</taxon>
        <taxon>Saccharomycetes</taxon>
        <taxon>Saccharomycetales</taxon>
        <taxon>Saccharomycetaceae</taxon>
        <taxon>Eremothecium</taxon>
    </lineage>
</organism>
<gene>
    <name type="ordered locus">ADR138C</name>
</gene>
<dbReference type="EC" id="2.3.1.35" evidence="1"/>
<dbReference type="EC" id="2.3.1.1" evidence="1"/>
<dbReference type="EMBL" id="AE016817">
    <property type="protein sequence ID" value="AAS52058.2"/>
    <property type="molecule type" value="Genomic_DNA"/>
</dbReference>
<dbReference type="RefSeq" id="NP_984234.2">
    <property type="nucleotide sequence ID" value="NM_209587.2"/>
</dbReference>
<dbReference type="SMR" id="Q759Y5"/>
<dbReference type="FunCoup" id="Q759Y5">
    <property type="interactions" value="306"/>
</dbReference>
<dbReference type="STRING" id="284811.Q759Y5"/>
<dbReference type="MEROPS" id="T05.001"/>
<dbReference type="EnsemblFungi" id="AAS52058">
    <property type="protein sequence ID" value="AAS52058"/>
    <property type="gene ID" value="AGOS_ADR138C"/>
</dbReference>
<dbReference type="GeneID" id="4620395"/>
<dbReference type="KEGG" id="ago:AGOS_ADR138C"/>
<dbReference type="eggNOG" id="KOG2786">
    <property type="taxonomic scope" value="Eukaryota"/>
</dbReference>
<dbReference type="HOGENOM" id="CLU_027172_1_0_1"/>
<dbReference type="InParanoid" id="Q759Y5"/>
<dbReference type="OMA" id="WGRIVMA"/>
<dbReference type="OrthoDB" id="2017946at2759"/>
<dbReference type="UniPathway" id="UPA00068">
    <property type="reaction ID" value="UER00106"/>
</dbReference>
<dbReference type="UniPathway" id="UPA00068">
    <property type="reaction ID" value="UER00111"/>
</dbReference>
<dbReference type="Proteomes" id="UP000000591">
    <property type="component" value="Chromosome IV"/>
</dbReference>
<dbReference type="GO" id="GO:0005759">
    <property type="term" value="C:mitochondrial matrix"/>
    <property type="evidence" value="ECO:0000318"/>
    <property type="project" value="GO_Central"/>
</dbReference>
<dbReference type="GO" id="GO:0004358">
    <property type="term" value="F:glutamate N-acetyltransferase activity"/>
    <property type="evidence" value="ECO:0007669"/>
    <property type="project" value="UniProtKB-UniRule"/>
</dbReference>
<dbReference type="GO" id="GO:0004042">
    <property type="term" value="F:L-glutamate N-acetyltransferase activity"/>
    <property type="evidence" value="ECO:0000318"/>
    <property type="project" value="GO_Central"/>
</dbReference>
<dbReference type="GO" id="GO:0006526">
    <property type="term" value="P:L-arginine biosynthetic process"/>
    <property type="evidence" value="ECO:0007669"/>
    <property type="project" value="UniProtKB-UniRule"/>
</dbReference>
<dbReference type="GO" id="GO:0006592">
    <property type="term" value="P:ornithine biosynthetic process"/>
    <property type="evidence" value="ECO:0000318"/>
    <property type="project" value="GO_Central"/>
</dbReference>
<dbReference type="CDD" id="cd02152">
    <property type="entry name" value="OAT"/>
    <property type="match status" value="1"/>
</dbReference>
<dbReference type="FunFam" id="3.10.20.340:FF:000002">
    <property type="entry name" value="Arginine biosynthesis bifunctional protein ArgJ, mitochondrial"/>
    <property type="match status" value="1"/>
</dbReference>
<dbReference type="FunFam" id="3.30.2330.10:FF:000001">
    <property type="entry name" value="Arginine biosynthesis bifunctional protein ArgJ, mitochondrial"/>
    <property type="match status" value="1"/>
</dbReference>
<dbReference type="FunFam" id="3.60.70.12:FF:000002">
    <property type="entry name" value="Arginine biosynthesis bifunctional protein ArgJ, mitochondrial"/>
    <property type="match status" value="1"/>
</dbReference>
<dbReference type="Gene3D" id="3.30.2330.10">
    <property type="entry name" value="arginine biosynthesis bifunctional protein suprefamily"/>
    <property type="match status" value="1"/>
</dbReference>
<dbReference type="Gene3D" id="3.10.20.340">
    <property type="entry name" value="ArgJ beta chain, C-terminal domain"/>
    <property type="match status" value="1"/>
</dbReference>
<dbReference type="Gene3D" id="3.60.70.12">
    <property type="entry name" value="L-amino peptidase D-ALA esterase/amidase"/>
    <property type="match status" value="1"/>
</dbReference>
<dbReference type="HAMAP" id="MF_01106">
    <property type="entry name" value="ArgJ"/>
    <property type="match status" value="1"/>
</dbReference>
<dbReference type="InterPro" id="IPR002813">
    <property type="entry name" value="Arg_biosynth_ArgJ"/>
</dbReference>
<dbReference type="InterPro" id="IPR016117">
    <property type="entry name" value="ArgJ-like_dom_sf"/>
</dbReference>
<dbReference type="InterPro" id="IPR042195">
    <property type="entry name" value="ArgJ_beta_C"/>
</dbReference>
<dbReference type="NCBIfam" id="TIGR00120">
    <property type="entry name" value="ArgJ"/>
    <property type="match status" value="1"/>
</dbReference>
<dbReference type="NCBIfam" id="NF003802">
    <property type="entry name" value="PRK05388.1"/>
    <property type="match status" value="1"/>
</dbReference>
<dbReference type="PANTHER" id="PTHR23100">
    <property type="entry name" value="ARGININE BIOSYNTHESIS BIFUNCTIONAL PROTEIN ARGJ"/>
    <property type="match status" value="1"/>
</dbReference>
<dbReference type="PANTHER" id="PTHR23100:SF0">
    <property type="entry name" value="ARGININE BIOSYNTHESIS BIFUNCTIONAL PROTEIN ARGJ, MITOCHONDRIAL"/>
    <property type="match status" value="1"/>
</dbReference>
<dbReference type="Pfam" id="PF01960">
    <property type="entry name" value="ArgJ"/>
    <property type="match status" value="1"/>
</dbReference>
<dbReference type="SUPFAM" id="SSF56266">
    <property type="entry name" value="DmpA/ArgJ-like"/>
    <property type="match status" value="1"/>
</dbReference>
<accession>Q759Y5</accession>
<keyword id="KW-0012">Acyltransferase</keyword>
<keyword id="KW-0028">Amino-acid biosynthesis</keyword>
<keyword id="KW-0055">Arginine biosynthesis</keyword>
<keyword id="KW-0068">Autocatalytic cleavage</keyword>
<keyword id="KW-0496">Mitochondrion</keyword>
<keyword id="KW-0511">Multifunctional enzyme</keyword>
<keyword id="KW-1185">Reference proteome</keyword>
<keyword id="KW-0808">Transferase</keyword>
<sequence>MKSSLSLCQRAANAASKYERYVPSCGVFPLGFKVGSIATGVKKNGQLDLGVILSTYEREGGATAAAVFTTNKFKAAPVVASKERLAKSEGRGISAIVVNSGCANAVTGAVGLENANKVVQLVEQQLGRKDTTLLMSTGVIGQHLSMDKIEHGLGTLLNNDDAFGNDFSSWLSLSKAMMTTDTFPKLISSRFTLPGGTTYTLTGISKGAGMICPNMATLLGFIGTDLPISPSALQNILSSAVDRSFNCISVDGDMSTNDTIYMLASGAIDTDLITESSESFPLIKAQVTELAQNLAQLVVRDGEGSTKFVTVHVKRALNFADAKVIAKTISNSSLVKCALYGQDANWGRILCAIGYAQLGDCASLDESTLNVSFVGVGDSKGAELNLVVDGVPNVNINESKAATMLADTDLKIVVDLGTGTEECNFWTCDLSHEYISINADYRS</sequence>
<proteinExistence type="inferred from homology"/>
<protein>
    <recommendedName>
        <fullName evidence="1">Arginine biosynthesis bifunctional protein ArgJ, mitochondrial</fullName>
    </recommendedName>
    <domain>
        <recommendedName>
            <fullName evidence="1">Glutamate N-acetyltransferase</fullName>
            <shortName evidence="1">GAT</shortName>
            <ecNumber evidence="1">2.3.1.35</ecNumber>
        </recommendedName>
        <alternativeName>
            <fullName evidence="1">Ornithine acetyltransferase</fullName>
            <shortName evidence="1">OATase</shortName>
        </alternativeName>
        <alternativeName>
            <fullName evidence="1">Ornithine transacetylase</fullName>
        </alternativeName>
    </domain>
    <domain>
        <recommendedName>
            <fullName evidence="1">Amino-acid acetyltransferase</fullName>
            <ecNumber evidence="1">2.3.1.1</ecNumber>
        </recommendedName>
        <alternativeName>
            <fullName evidence="1">N-acetylglutamate synthase</fullName>
            <shortName evidence="1">AGS</shortName>
        </alternativeName>
    </domain>
    <component>
        <recommendedName>
            <fullName evidence="1">Arginine biosynthesis bifunctional protein ArgJ alpha chain</fullName>
        </recommendedName>
    </component>
    <component>
        <recommendedName>
            <fullName evidence="1">Arginine biosynthesis bifunctional protein ArgJ beta chain</fullName>
        </recommendedName>
    </component>
</protein>
<comment type="function">
    <text evidence="1">Catalyzes two activities which are involved in the cyclic version of arginine biosynthesis: the synthesis of acetylglutamate from glutamate and acetyl-CoA, and of ornithine by transacetylation between acetylornithine and glutamate.</text>
</comment>
<comment type="catalytic activity">
    <reaction evidence="1">
        <text>N(2)-acetyl-L-ornithine + L-glutamate = N-acetyl-L-glutamate + L-ornithine</text>
        <dbReference type="Rhea" id="RHEA:15349"/>
        <dbReference type="ChEBI" id="CHEBI:29985"/>
        <dbReference type="ChEBI" id="CHEBI:44337"/>
        <dbReference type="ChEBI" id="CHEBI:46911"/>
        <dbReference type="ChEBI" id="CHEBI:57805"/>
        <dbReference type="EC" id="2.3.1.35"/>
    </reaction>
</comment>
<comment type="catalytic activity">
    <reaction evidence="1">
        <text>L-glutamate + acetyl-CoA = N-acetyl-L-glutamate + CoA + H(+)</text>
        <dbReference type="Rhea" id="RHEA:24292"/>
        <dbReference type="ChEBI" id="CHEBI:15378"/>
        <dbReference type="ChEBI" id="CHEBI:29985"/>
        <dbReference type="ChEBI" id="CHEBI:44337"/>
        <dbReference type="ChEBI" id="CHEBI:57287"/>
        <dbReference type="ChEBI" id="CHEBI:57288"/>
        <dbReference type="EC" id="2.3.1.1"/>
    </reaction>
</comment>
<comment type="pathway">
    <text evidence="1">Amino-acid biosynthesis; L-arginine biosynthesis; L-ornithine and N-acetyl-L-glutamate from L-glutamate and N(2)-acetyl-L-ornithine (cyclic): step 1/1.</text>
</comment>
<comment type="pathway">
    <text evidence="1">Amino-acid biosynthesis; L-arginine biosynthesis; N(2)-acetyl-L-ornithine from L-glutamate: step 1/4.</text>
</comment>
<comment type="subunit">
    <text evidence="1">Heterodimer of an alpha and a beta chain.</text>
</comment>
<comment type="subcellular location">
    <subcellularLocation>
        <location evidence="1">Mitochondrion matrix</location>
    </subcellularLocation>
</comment>
<comment type="PTM">
    <text evidence="1">The alpha and beta chains are autoproteolytically processed from a single precursor protein within the mitochondrion.</text>
</comment>
<comment type="miscellaneous">
    <text evidence="1">This protein may be expected to contain an N-terminal transit peptide but none has been predicted.</text>
</comment>
<comment type="similarity">
    <text evidence="1">Belongs to the ArgJ family.</text>
</comment>
<name>ARGJ_EREGS</name>
<reference key="1">
    <citation type="journal article" date="2004" name="Science">
        <title>The Ashbya gossypii genome as a tool for mapping the ancient Saccharomyces cerevisiae genome.</title>
        <authorList>
            <person name="Dietrich F.S."/>
            <person name="Voegeli S."/>
            <person name="Brachat S."/>
            <person name="Lerch A."/>
            <person name="Gates K."/>
            <person name="Steiner S."/>
            <person name="Mohr C."/>
            <person name="Poehlmann R."/>
            <person name="Luedi P."/>
            <person name="Choi S."/>
            <person name="Wing R.A."/>
            <person name="Flavier A."/>
            <person name="Gaffney T.D."/>
            <person name="Philippsen P."/>
        </authorList>
    </citation>
    <scope>NUCLEOTIDE SEQUENCE [LARGE SCALE GENOMIC DNA]</scope>
    <source>
        <strain>ATCC 10895 / CBS 109.51 / FGSC 9923 / NRRL Y-1056</strain>
    </source>
</reference>
<reference key="2">
    <citation type="journal article" date="2013" name="G3 (Bethesda)">
        <title>Genomes of Ashbya fungi isolated from insects reveal four mating-type loci, numerous translocations, lack of transposons, and distinct gene duplications.</title>
        <authorList>
            <person name="Dietrich F.S."/>
            <person name="Voegeli S."/>
            <person name="Kuo S."/>
            <person name="Philippsen P."/>
        </authorList>
    </citation>
    <scope>GENOME REANNOTATION</scope>
    <scope>SEQUENCE REVISION TO 119</scope>
    <source>
        <strain>ATCC 10895 / CBS 109.51 / FGSC 9923 / NRRL Y-1056</strain>
    </source>
</reference>
<evidence type="ECO:0000255" key="1">
    <source>
        <dbReference type="HAMAP-Rule" id="MF_03124"/>
    </source>
</evidence>
<feature type="chain" id="PRO_0000398010" description="Arginine biosynthesis bifunctional protein ArgJ alpha chain" evidence="1">
    <location>
        <begin position="1"/>
        <end position="216"/>
    </location>
</feature>
<feature type="chain" id="PRO_0000398011" description="Arginine biosynthesis bifunctional protein ArgJ beta chain" evidence="1">
    <location>
        <begin position="217"/>
        <end position="443"/>
    </location>
</feature>
<feature type="active site" description="Nucleophile" evidence="1">
    <location>
        <position position="217"/>
    </location>
</feature>
<feature type="binding site" evidence="1">
    <location>
        <position position="179"/>
    </location>
    <ligand>
        <name>substrate</name>
    </ligand>
</feature>
<feature type="binding site" evidence="1">
    <location>
        <position position="206"/>
    </location>
    <ligand>
        <name>substrate</name>
    </ligand>
</feature>
<feature type="binding site" evidence="1">
    <location>
        <position position="217"/>
    </location>
    <ligand>
        <name>substrate</name>
    </ligand>
</feature>
<feature type="binding site" evidence="1">
    <location>
        <position position="303"/>
    </location>
    <ligand>
        <name>substrate</name>
    </ligand>
</feature>
<feature type="binding site" evidence="1">
    <location>
        <position position="438"/>
    </location>
    <ligand>
        <name>substrate</name>
    </ligand>
</feature>
<feature type="binding site" evidence="1">
    <location>
        <position position="443"/>
    </location>
    <ligand>
        <name>substrate</name>
    </ligand>
</feature>
<feature type="site" description="Involved in the stabilization of negative charge on the oxyanion by the formation of the oxyanion hole" evidence="1">
    <location>
        <position position="137"/>
    </location>
</feature>
<feature type="site" description="Involved in the stabilization of negative charge on the oxyanion by the formation of the oxyanion hole" evidence="1">
    <location>
        <position position="138"/>
    </location>
</feature>
<feature type="site" description="Cleavage; by autolysis" evidence="1">
    <location>
        <begin position="216"/>
        <end position="217"/>
    </location>
</feature>